<accession>Q99XN7</accession>
<accession>Q48W53</accession>
<name>MUTL_STRP1</name>
<reference key="1">
    <citation type="journal article" date="2001" name="Proc. Natl. Acad. Sci. U.S.A.">
        <title>Complete genome sequence of an M1 strain of Streptococcus pyogenes.</title>
        <authorList>
            <person name="Ferretti J.J."/>
            <person name="McShan W.M."/>
            <person name="Ajdic D.J."/>
            <person name="Savic D.J."/>
            <person name="Savic G."/>
            <person name="Lyon K."/>
            <person name="Primeaux C."/>
            <person name="Sezate S."/>
            <person name="Suvorov A.N."/>
            <person name="Kenton S."/>
            <person name="Lai H.S."/>
            <person name="Lin S.P."/>
            <person name="Qian Y."/>
            <person name="Jia H.G."/>
            <person name="Najar F.Z."/>
            <person name="Ren Q."/>
            <person name="Zhu H."/>
            <person name="Song L."/>
            <person name="White J."/>
            <person name="Yuan X."/>
            <person name="Clifton S.W."/>
            <person name="Roe B.A."/>
            <person name="McLaughlin R.E."/>
        </authorList>
    </citation>
    <scope>NUCLEOTIDE SEQUENCE [LARGE SCALE GENOMIC DNA]</scope>
    <source>
        <strain>ATCC 700294 / SF370 / Serotype M1</strain>
    </source>
</reference>
<reference key="2">
    <citation type="journal article" date="2005" name="J. Infect. Dis.">
        <title>Evolutionary origin and emergence of a highly successful clone of serotype M1 group A Streptococcus involved multiple horizontal gene transfer events.</title>
        <authorList>
            <person name="Sumby P."/>
            <person name="Porcella S.F."/>
            <person name="Madrigal A.G."/>
            <person name="Barbian K.D."/>
            <person name="Virtaneva K."/>
            <person name="Ricklefs S.M."/>
            <person name="Sturdevant D.E."/>
            <person name="Graham M.R."/>
            <person name="Vuopio-Varkila J."/>
            <person name="Hoe N.P."/>
            <person name="Musser J.M."/>
        </authorList>
    </citation>
    <scope>NUCLEOTIDE SEQUENCE [LARGE SCALE GENOMIC DNA]</scope>
    <source>
        <strain>ATCC BAA-947 / MGAS5005 / Serotype M1</strain>
    </source>
</reference>
<gene>
    <name evidence="1" type="primary">mutL</name>
    <name type="ordered locus">SPy_2121</name>
    <name type="ordered locus">M5005_Spy1804</name>
</gene>
<proteinExistence type="inferred from homology"/>
<dbReference type="EMBL" id="AE004092">
    <property type="protein sequence ID" value="AAK34766.1"/>
    <property type="molecule type" value="Genomic_DNA"/>
</dbReference>
<dbReference type="EMBL" id="CP000017">
    <property type="protein sequence ID" value="AAZ52422.1"/>
    <property type="molecule type" value="Genomic_DNA"/>
</dbReference>
<dbReference type="RefSeq" id="NP_270045.1">
    <property type="nucleotide sequence ID" value="NC_002737.2"/>
</dbReference>
<dbReference type="SMR" id="Q99XN7"/>
<dbReference type="PaxDb" id="1314-HKU360_01918"/>
<dbReference type="KEGG" id="spy:SPy_2121"/>
<dbReference type="KEGG" id="spz:M5005_Spy1804"/>
<dbReference type="PATRIC" id="fig|160490.10.peg.1838"/>
<dbReference type="HOGENOM" id="CLU_004131_4_1_9"/>
<dbReference type="OMA" id="AHERIMY"/>
<dbReference type="Proteomes" id="UP000000750">
    <property type="component" value="Chromosome"/>
</dbReference>
<dbReference type="GO" id="GO:0032300">
    <property type="term" value="C:mismatch repair complex"/>
    <property type="evidence" value="ECO:0007669"/>
    <property type="project" value="InterPro"/>
</dbReference>
<dbReference type="GO" id="GO:0005524">
    <property type="term" value="F:ATP binding"/>
    <property type="evidence" value="ECO:0007669"/>
    <property type="project" value="InterPro"/>
</dbReference>
<dbReference type="GO" id="GO:0016887">
    <property type="term" value="F:ATP hydrolysis activity"/>
    <property type="evidence" value="ECO:0007669"/>
    <property type="project" value="InterPro"/>
</dbReference>
<dbReference type="GO" id="GO:0140664">
    <property type="term" value="F:ATP-dependent DNA damage sensor activity"/>
    <property type="evidence" value="ECO:0007669"/>
    <property type="project" value="InterPro"/>
</dbReference>
<dbReference type="GO" id="GO:0030983">
    <property type="term" value="F:mismatched DNA binding"/>
    <property type="evidence" value="ECO:0007669"/>
    <property type="project" value="InterPro"/>
</dbReference>
<dbReference type="GO" id="GO:0006298">
    <property type="term" value="P:mismatch repair"/>
    <property type="evidence" value="ECO:0007669"/>
    <property type="project" value="UniProtKB-UniRule"/>
</dbReference>
<dbReference type="CDD" id="cd16926">
    <property type="entry name" value="HATPase_MutL-MLH-PMS-like"/>
    <property type="match status" value="1"/>
</dbReference>
<dbReference type="CDD" id="cd00782">
    <property type="entry name" value="MutL_Trans"/>
    <property type="match status" value="1"/>
</dbReference>
<dbReference type="FunFam" id="3.30.1370.100:FF:000004">
    <property type="entry name" value="DNA mismatch repair endonuclease MutL"/>
    <property type="match status" value="1"/>
</dbReference>
<dbReference type="FunFam" id="3.30.565.10:FF:000003">
    <property type="entry name" value="DNA mismatch repair endonuclease MutL"/>
    <property type="match status" value="1"/>
</dbReference>
<dbReference type="Gene3D" id="3.30.230.10">
    <property type="match status" value="1"/>
</dbReference>
<dbReference type="Gene3D" id="3.30.565.10">
    <property type="entry name" value="Histidine kinase-like ATPase, C-terminal domain"/>
    <property type="match status" value="1"/>
</dbReference>
<dbReference type="Gene3D" id="3.30.1540.20">
    <property type="entry name" value="MutL, C-terminal domain, dimerisation subdomain"/>
    <property type="match status" value="1"/>
</dbReference>
<dbReference type="Gene3D" id="3.30.1370.100">
    <property type="entry name" value="MutL, C-terminal domain, regulatory subdomain"/>
    <property type="match status" value="1"/>
</dbReference>
<dbReference type="HAMAP" id="MF_00149">
    <property type="entry name" value="DNA_mis_repair"/>
    <property type="match status" value="1"/>
</dbReference>
<dbReference type="InterPro" id="IPR014762">
    <property type="entry name" value="DNA_mismatch_repair_CS"/>
</dbReference>
<dbReference type="InterPro" id="IPR020667">
    <property type="entry name" value="DNA_mismatch_repair_MutL"/>
</dbReference>
<dbReference type="InterPro" id="IPR013507">
    <property type="entry name" value="DNA_mismatch_S5_2-like"/>
</dbReference>
<dbReference type="InterPro" id="IPR036890">
    <property type="entry name" value="HATPase_C_sf"/>
</dbReference>
<dbReference type="InterPro" id="IPR002099">
    <property type="entry name" value="MutL/Mlh/PMS"/>
</dbReference>
<dbReference type="InterPro" id="IPR038973">
    <property type="entry name" value="MutL/Mlh/Pms-like"/>
</dbReference>
<dbReference type="InterPro" id="IPR014790">
    <property type="entry name" value="MutL_C"/>
</dbReference>
<dbReference type="InterPro" id="IPR042120">
    <property type="entry name" value="MutL_C_dimsub"/>
</dbReference>
<dbReference type="InterPro" id="IPR042121">
    <property type="entry name" value="MutL_C_regsub"/>
</dbReference>
<dbReference type="InterPro" id="IPR037198">
    <property type="entry name" value="MutL_C_sf"/>
</dbReference>
<dbReference type="InterPro" id="IPR020568">
    <property type="entry name" value="Ribosomal_Su5_D2-typ_SF"/>
</dbReference>
<dbReference type="InterPro" id="IPR014721">
    <property type="entry name" value="Ribsml_uS5_D2-typ_fold_subgr"/>
</dbReference>
<dbReference type="NCBIfam" id="TIGR00585">
    <property type="entry name" value="mutl"/>
    <property type="match status" value="1"/>
</dbReference>
<dbReference type="NCBIfam" id="NF000950">
    <property type="entry name" value="PRK00095.1-3"/>
    <property type="match status" value="1"/>
</dbReference>
<dbReference type="PANTHER" id="PTHR10073">
    <property type="entry name" value="DNA MISMATCH REPAIR PROTEIN MLH, PMS, MUTL"/>
    <property type="match status" value="1"/>
</dbReference>
<dbReference type="PANTHER" id="PTHR10073:SF12">
    <property type="entry name" value="DNA MISMATCH REPAIR PROTEIN MLH1"/>
    <property type="match status" value="1"/>
</dbReference>
<dbReference type="Pfam" id="PF01119">
    <property type="entry name" value="DNA_mis_repair"/>
    <property type="match status" value="1"/>
</dbReference>
<dbReference type="Pfam" id="PF13589">
    <property type="entry name" value="HATPase_c_3"/>
    <property type="match status" value="1"/>
</dbReference>
<dbReference type="Pfam" id="PF08676">
    <property type="entry name" value="MutL_C"/>
    <property type="match status" value="1"/>
</dbReference>
<dbReference type="SMART" id="SM01340">
    <property type="entry name" value="DNA_mis_repair"/>
    <property type="match status" value="1"/>
</dbReference>
<dbReference type="SMART" id="SM00853">
    <property type="entry name" value="MutL_C"/>
    <property type="match status" value="1"/>
</dbReference>
<dbReference type="SUPFAM" id="SSF55874">
    <property type="entry name" value="ATPase domain of HSP90 chaperone/DNA topoisomerase II/histidine kinase"/>
    <property type="match status" value="1"/>
</dbReference>
<dbReference type="SUPFAM" id="SSF118116">
    <property type="entry name" value="DNA mismatch repair protein MutL"/>
    <property type="match status" value="1"/>
</dbReference>
<dbReference type="SUPFAM" id="SSF54211">
    <property type="entry name" value="Ribosomal protein S5 domain 2-like"/>
    <property type="match status" value="1"/>
</dbReference>
<dbReference type="PROSITE" id="PS00058">
    <property type="entry name" value="DNA_MISMATCH_REPAIR_1"/>
    <property type="match status" value="1"/>
</dbReference>
<sequence>MTNIIELPEVLANQIAAGEVVERPASVVKELVENAIDAKSSQITVEIEESGLKMIQVTDNGEGMSHEDLPLSLRRHATSKIKSQSDLFRIRTLGFRGEALPSVASISKITIKTATKEVTHGSLLIATGGEIETLEAISTPTGTKIKVENLFYNTPARLKYMKSLQAELAHIVDVVNRLSLAHPEVAFTLISDGRQLTQTSGTGDLRQAIAGIYGLNTTKKMLAISNADLDFEVSGYVSLPELTRANRNYMTILVNGRYIKNFLLNRAILDGYGSKLMVGRFPIVVIDIQIDPYLADVNVHPTKQEVRISKERELMALISTAISESLKEQDLIPDALENLAKSSTRHFSKPEQTQLPLQSRGLYYDPQKNDFFVKESAVSEKIPETDFYSGAVDNSVKVEKVELLPHSEEVIGPSSVKHASRPQNTFTETDHPNLDLKNRQKLSQMLTRLENEGQSVFPELDYFGQMHGTYLFAQGKDGLFIIDQHAAQERVKYEYYRDKIGEVDSSLQQLLVPYLFEFSGSDFINLQEKMALLNEVGIFLEVYGHNTFILREHPIWMKEEEIASGVYEMCDMLLLTNEVSIKTYRAELAIMMSCKRSIKANHSLDDYSARNLLLQLAQCQNPYNCPHGRPVLINFSKADMEKMFRRIQENHTSLRELGKY</sequence>
<protein>
    <recommendedName>
        <fullName evidence="1">DNA mismatch repair protein MutL</fullName>
    </recommendedName>
</protein>
<keyword id="KW-0227">DNA damage</keyword>
<keyword id="KW-0234">DNA repair</keyword>
<keyword id="KW-1185">Reference proteome</keyword>
<evidence type="ECO:0000255" key="1">
    <source>
        <dbReference type="HAMAP-Rule" id="MF_00149"/>
    </source>
</evidence>
<feature type="chain" id="PRO_0000177979" description="DNA mismatch repair protein MutL">
    <location>
        <begin position="1"/>
        <end position="660"/>
    </location>
</feature>
<comment type="function">
    <text evidence="1">This protein is involved in the repair of mismatches in DNA. It is required for dam-dependent methyl-directed DNA mismatch repair. May act as a 'molecular matchmaker', a protein that promotes the formation of a stable complex between two or more DNA-binding proteins in an ATP-dependent manner without itself being part of a final effector complex.</text>
</comment>
<comment type="similarity">
    <text evidence="1">Belongs to the DNA mismatch repair MutL/HexB family.</text>
</comment>
<organism>
    <name type="scientific">Streptococcus pyogenes serotype M1</name>
    <dbReference type="NCBI Taxonomy" id="301447"/>
    <lineage>
        <taxon>Bacteria</taxon>
        <taxon>Bacillati</taxon>
        <taxon>Bacillota</taxon>
        <taxon>Bacilli</taxon>
        <taxon>Lactobacillales</taxon>
        <taxon>Streptococcaceae</taxon>
        <taxon>Streptococcus</taxon>
    </lineage>
</organism>